<accession>B1XCS7</accession>
<organism>
    <name type="scientific">Escherichia coli (strain K12 / DH10B)</name>
    <dbReference type="NCBI Taxonomy" id="316385"/>
    <lineage>
        <taxon>Bacteria</taxon>
        <taxon>Pseudomonadati</taxon>
        <taxon>Pseudomonadota</taxon>
        <taxon>Gammaproteobacteria</taxon>
        <taxon>Enterobacterales</taxon>
        <taxon>Enterobacteriaceae</taxon>
        <taxon>Escherichia</taxon>
    </lineage>
</organism>
<gene>
    <name evidence="2" type="primary">cysN</name>
    <name type="ordered locus">ECDH10B_2919</name>
</gene>
<comment type="function">
    <text evidence="2">With CysD forms the ATP sulfurylase (ATPS) that catalyzes the adenylation of sulfate producing adenosine 5'-phosphosulfate (APS) and diphosphate, the first enzymatic step in sulfur assimilation pathway. APS synthesis involves the formation of a high-energy phosphoric-sulfuric acid anhydride bond driven by GTP hydrolysis by CysN coupled to ATP hydrolysis by CysD.</text>
</comment>
<comment type="catalytic activity">
    <reaction evidence="2">
        <text>sulfate + ATP + H(+) = adenosine 5'-phosphosulfate + diphosphate</text>
        <dbReference type="Rhea" id="RHEA:18133"/>
        <dbReference type="ChEBI" id="CHEBI:15378"/>
        <dbReference type="ChEBI" id="CHEBI:16189"/>
        <dbReference type="ChEBI" id="CHEBI:30616"/>
        <dbReference type="ChEBI" id="CHEBI:33019"/>
        <dbReference type="ChEBI" id="CHEBI:58243"/>
        <dbReference type="EC" id="2.7.7.4"/>
    </reaction>
</comment>
<comment type="pathway">
    <text evidence="2">Sulfur metabolism; hydrogen sulfide biosynthesis; sulfite from sulfate: step 1/3.</text>
</comment>
<comment type="subunit">
    <text evidence="2">Heterodimer composed of CysD, the smaller subunit, and CysN.</text>
</comment>
<comment type="similarity">
    <text evidence="2">Belongs to the TRAFAC class translation factor GTPase superfamily. Classic translation factor GTPase family. CysN/NodQ subfamily.</text>
</comment>
<proteinExistence type="inferred from homology"/>
<sequence>MNTALAQQIANEGGVEAWMIAQQHKSLLRFLTCGSVDDGKSTLIGRLLHDTRQIYEDQLSSLHNDSKRHGTQGEKLDLALLVDGLQAEREQGITIDVAYRYFSTEKRKFIIADTPGHEQYTRNMATGASTCELAILLIDARKGVLDQTRRHSFISTLLGIKHLVVAINKMDLVDYSEETFTRIREDYLTFAGQLPGNLDIRFVPLSALEGDNVASQSESMPWYSGPTLLEVLETVEIQRVVDAQPMRFPVQYVNRPNLDFRGYAGTLASGRVEVGQRVKVLPSGVESNVARIVTFDGDREEAFAGEAITLVLTDEIDISRGDLLLAADEALPAVQSASVDVVWMAEQPLSPGQSYDIKIAGKKTRARVDGIRYQVDINNLTQREVENLPLNGIGLVDLTFDEPLVLDRYQQNPVTGGLIFIDRLSNVTVGAGMVHEPVSQATAAPSEFSAFELELNALVRRHFPHWGARDLLGDK</sequence>
<name>CYSN_ECODH</name>
<keyword id="KW-0067">ATP-binding</keyword>
<keyword id="KW-0342">GTP-binding</keyword>
<keyword id="KW-0547">Nucleotide-binding</keyword>
<keyword id="KW-0548">Nucleotidyltransferase</keyword>
<keyword id="KW-0808">Transferase</keyword>
<evidence type="ECO:0000250" key="1"/>
<evidence type="ECO:0000255" key="2">
    <source>
        <dbReference type="HAMAP-Rule" id="MF_00062"/>
    </source>
</evidence>
<feature type="chain" id="PRO_1000092139" description="Sulfate adenylyltransferase subunit 1">
    <location>
        <begin position="1"/>
        <end position="475"/>
    </location>
</feature>
<feature type="domain" description="tr-type G">
    <location>
        <begin position="25"/>
        <end position="239"/>
    </location>
</feature>
<feature type="region of interest" description="G1" evidence="1">
    <location>
        <begin position="34"/>
        <end position="41"/>
    </location>
</feature>
<feature type="region of interest" description="G2" evidence="1">
    <location>
        <begin position="92"/>
        <end position="96"/>
    </location>
</feature>
<feature type="region of interest" description="G3" evidence="1">
    <location>
        <begin position="113"/>
        <end position="116"/>
    </location>
</feature>
<feature type="region of interest" description="G4" evidence="1">
    <location>
        <begin position="168"/>
        <end position="171"/>
    </location>
</feature>
<feature type="region of interest" description="G5" evidence="1">
    <location>
        <begin position="206"/>
        <end position="208"/>
    </location>
</feature>
<feature type="binding site" evidence="2">
    <location>
        <begin position="34"/>
        <end position="41"/>
    </location>
    <ligand>
        <name>GTP</name>
        <dbReference type="ChEBI" id="CHEBI:37565"/>
    </ligand>
</feature>
<feature type="binding site" evidence="2">
    <location>
        <begin position="113"/>
        <end position="117"/>
    </location>
    <ligand>
        <name>GTP</name>
        <dbReference type="ChEBI" id="CHEBI:37565"/>
    </ligand>
</feature>
<feature type="binding site" evidence="2">
    <location>
        <begin position="168"/>
        <end position="171"/>
    </location>
    <ligand>
        <name>GTP</name>
        <dbReference type="ChEBI" id="CHEBI:37565"/>
    </ligand>
</feature>
<protein>
    <recommendedName>
        <fullName evidence="2">Sulfate adenylyltransferase subunit 1</fullName>
        <ecNumber evidence="2">2.7.7.4</ecNumber>
    </recommendedName>
    <alternativeName>
        <fullName evidence="2">ATP-sulfurylase large subunit</fullName>
    </alternativeName>
    <alternativeName>
        <fullName evidence="2">Sulfate adenylate transferase</fullName>
        <shortName evidence="2">SAT</shortName>
    </alternativeName>
</protein>
<dbReference type="EC" id="2.7.7.4" evidence="2"/>
<dbReference type="EMBL" id="CP000948">
    <property type="protein sequence ID" value="ACB03868.1"/>
    <property type="molecule type" value="Genomic_DNA"/>
</dbReference>
<dbReference type="RefSeq" id="WP_001090361.1">
    <property type="nucleotide sequence ID" value="NC_010473.1"/>
</dbReference>
<dbReference type="SMR" id="B1XCS7"/>
<dbReference type="GeneID" id="93779255"/>
<dbReference type="KEGG" id="ecd:ECDH10B_2919"/>
<dbReference type="HOGENOM" id="CLU_007265_5_2_6"/>
<dbReference type="UniPathway" id="UPA00140">
    <property type="reaction ID" value="UER00204"/>
</dbReference>
<dbReference type="GO" id="GO:0005524">
    <property type="term" value="F:ATP binding"/>
    <property type="evidence" value="ECO:0007669"/>
    <property type="project" value="UniProtKB-KW"/>
</dbReference>
<dbReference type="GO" id="GO:0005525">
    <property type="term" value="F:GTP binding"/>
    <property type="evidence" value="ECO:0007669"/>
    <property type="project" value="UniProtKB-UniRule"/>
</dbReference>
<dbReference type="GO" id="GO:0003924">
    <property type="term" value="F:GTPase activity"/>
    <property type="evidence" value="ECO:0007669"/>
    <property type="project" value="InterPro"/>
</dbReference>
<dbReference type="GO" id="GO:0004781">
    <property type="term" value="F:sulfate adenylyltransferase (ATP) activity"/>
    <property type="evidence" value="ECO:0007669"/>
    <property type="project" value="UniProtKB-UniRule"/>
</dbReference>
<dbReference type="GO" id="GO:0070814">
    <property type="term" value="P:hydrogen sulfide biosynthetic process"/>
    <property type="evidence" value="ECO:0007669"/>
    <property type="project" value="UniProtKB-UniRule"/>
</dbReference>
<dbReference type="GO" id="GO:0000103">
    <property type="term" value="P:sulfate assimilation"/>
    <property type="evidence" value="ECO:0007669"/>
    <property type="project" value="UniProtKB-UniRule"/>
</dbReference>
<dbReference type="CDD" id="cd04166">
    <property type="entry name" value="CysN_ATPS"/>
    <property type="match status" value="1"/>
</dbReference>
<dbReference type="CDD" id="cd03695">
    <property type="entry name" value="CysN_NodQ_II"/>
    <property type="match status" value="1"/>
</dbReference>
<dbReference type="CDD" id="cd04095">
    <property type="entry name" value="CysN_NoDQ_III"/>
    <property type="match status" value="1"/>
</dbReference>
<dbReference type="FunFam" id="2.40.30.10:FF:000027">
    <property type="entry name" value="Sulfate adenylyltransferase subunit 1"/>
    <property type="match status" value="1"/>
</dbReference>
<dbReference type="FunFam" id="2.40.30.10:FF:000031">
    <property type="entry name" value="Sulfate adenylyltransferase subunit 1"/>
    <property type="match status" value="1"/>
</dbReference>
<dbReference type="FunFam" id="3.40.50.300:FF:000119">
    <property type="entry name" value="Sulfate adenylyltransferase subunit 1"/>
    <property type="match status" value="1"/>
</dbReference>
<dbReference type="Gene3D" id="3.40.50.300">
    <property type="entry name" value="P-loop containing nucleotide triphosphate hydrolases"/>
    <property type="match status" value="1"/>
</dbReference>
<dbReference type="Gene3D" id="2.40.30.10">
    <property type="entry name" value="Translation factors"/>
    <property type="match status" value="2"/>
</dbReference>
<dbReference type="HAMAP" id="MF_00062">
    <property type="entry name" value="Sulf_adenylyltr_sub1"/>
    <property type="match status" value="1"/>
</dbReference>
<dbReference type="InterPro" id="IPR041757">
    <property type="entry name" value="CysN_GTP-bd"/>
</dbReference>
<dbReference type="InterPro" id="IPR044138">
    <property type="entry name" value="CysN_II"/>
</dbReference>
<dbReference type="InterPro" id="IPR044139">
    <property type="entry name" value="CysN_NoDQ_III"/>
</dbReference>
<dbReference type="InterPro" id="IPR031157">
    <property type="entry name" value="G_TR_CS"/>
</dbReference>
<dbReference type="InterPro" id="IPR054696">
    <property type="entry name" value="GTP-eEF1A_C"/>
</dbReference>
<dbReference type="InterPro" id="IPR027417">
    <property type="entry name" value="P-loop_NTPase"/>
</dbReference>
<dbReference type="InterPro" id="IPR005225">
    <property type="entry name" value="Small_GTP-bd"/>
</dbReference>
<dbReference type="InterPro" id="IPR011779">
    <property type="entry name" value="SO4_adenylTrfase_lsu"/>
</dbReference>
<dbReference type="InterPro" id="IPR000795">
    <property type="entry name" value="T_Tr_GTP-bd_dom"/>
</dbReference>
<dbReference type="InterPro" id="IPR050100">
    <property type="entry name" value="TRAFAC_GTPase_members"/>
</dbReference>
<dbReference type="InterPro" id="IPR009000">
    <property type="entry name" value="Transl_B-barrel_sf"/>
</dbReference>
<dbReference type="InterPro" id="IPR009001">
    <property type="entry name" value="Transl_elong_EF1A/Init_IF2_C"/>
</dbReference>
<dbReference type="NCBIfam" id="TIGR02034">
    <property type="entry name" value="CysN"/>
    <property type="match status" value="1"/>
</dbReference>
<dbReference type="NCBIfam" id="NF003478">
    <property type="entry name" value="PRK05124.1"/>
    <property type="match status" value="1"/>
</dbReference>
<dbReference type="NCBIfam" id="TIGR00231">
    <property type="entry name" value="small_GTP"/>
    <property type="match status" value="1"/>
</dbReference>
<dbReference type="PANTHER" id="PTHR23115">
    <property type="entry name" value="TRANSLATION FACTOR"/>
    <property type="match status" value="1"/>
</dbReference>
<dbReference type="Pfam" id="PF22594">
    <property type="entry name" value="GTP-eEF1A_C"/>
    <property type="match status" value="1"/>
</dbReference>
<dbReference type="Pfam" id="PF00009">
    <property type="entry name" value="GTP_EFTU"/>
    <property type="match status" value="1"/>
</dbReference>
<dbReference type="PRINTS" id="PR00315">
    <property type="entry name" value="ELONGATNFCT"/>
</dbReference>
<dbReference type="SUPFAM" id="SSF50465">
    <property type="entry name" value="EF-Tu/eEF-1alpha/eIF2-gamma C-terminal domain"/>
    <property type="match status" value="1"/>
</dbReference>
<dbReference type="SUPFAM" id="SSF52540">
    <property type="entry name" value="P-loop containing nucleoside triphosphate hydrolases"/>
    <property type="match status" value="1"/>
</dbReference>
<dbReference type="SUPFAM" id="SSF50447">
    <property type="entry name" value="Translation proteins"/>
    <property type="match status" value="1"/>
</dbReference>
<dbReference type="PROSITE" id="PS00301">
    <property type="entry name" value="G_TR_1"/>
    <property type="match status" value="1"/>
</dbReference>
<dbReference type="PROSITE" id="PS51722">
    <property type="entry name" value="G_TR_2"/>
    <property type="match status" value="1"/>
</dbReference>
<reference key="1">
    <citation type="journal article" date="2008" name="J. Bacteriol.">
        <title>The complete genome sequence of Escherichia coli DH10B: insights into the biology of a laboratory workhorse.</title>
        <authorList>
            <person name="Durfee T."/>
            <person name="Nelson R."/>
            <person name="Baldwin S."/>
            <person name="Plunkett G. III"/>
            <person name="Burland V."/>
            <person name="Mau B."/>
            <person name="Petrosino J.F."/>
            <person name="Qin X."/>
            <person name="Muzny D.M."/>
            <person name="Ayele M."/>
            <person name="Gibbs R.A."/>
            <person name="Csorgo B."/>
            <person name="Posfai G."/>
            <person name="Weinstock G.M."/>
            <person name="Blattner F.R."/>
        </authorList>
    </citation>
    <scope>NUCLEOTIDE SEQUENCE [LARGE SCALE GENOMIC DNA]</scope>
    <source>
        <strain>K12 / DH10B</strain>
    </source>
</reference>